<accession>Q97B29</accession>
<comment type="function">
    <text evidence="1">Catalyzes the condensation of carbamoyl phosphate and aspartate to form carbamoyl aspartate and inorganic phosphate, the committed step in the de novo pyrimidine nucleotide biosynthesis pathway.</text>
</comment>
<comment type="catalytic activity">
    <reaction evidence="1">
        <text>carbamoyl phosphate + L-aspartate = N-carbamoyl-L-aspartate + phosphate + H(+)</text>
        <dbReference type="Rhea" id="RHEA:20013"/>
        <dbReference type="ChEBI" id="CHEBI:15378"/>
        <dbReference type="ChEBI" id="CHEBI:29991"/>
        <dbReference type="ChEBI" id="CHEBI:32814"/>
        <dbReference type="ChEBI" id="CHEBI:43474"/>
        <dbReference type="ChEBI" id="CHEBI:58228"/>
        <dbReference type="EC" id="2.1.3.2"/>
    </reaction>
</comment>
<comment type="pathway">
    <text evidence="1">Pyrimidine metabolism; UMP biosynthesis via de novo pathway; (S)-dihydroorotate from bicarbonate: step 2/3.</text>
</comment>
<comment type="subunit">
    <text evidence="1">Heterooligomer of catalytic and regulatory chains.</text>
</comment>
<comment type="similarity">
    <text evidence="1">Belongs to the aspartate/ornithine carbamoyltransferase superfamily. ATCase family.</text>
</comment>
<sequence>MLKNKSVVSIDDVQNDDLFEIFDLSESMLKTIESKGNAPLLTNKIMATLFYEPSTRTRLSFESAMHRLGGSVITVSDTKTSSAAKGETLADTVRMASSYSDIIVIRHPLEGAARLASRFTSKPIINAGDGSGQHPTQTILDLFTIKKELGSIDGKVITMVGDLRYGRTIHSLIIALSRFDVKVNLVSPEILRLPEYVYSMLPDRNYVKEYNDLEEVIGETDVLYVTRIQKERFSDQNEYQSVIGSYSINSETVEKMKKKSVIMHPLPRVDEISPDVDNMPQAAYFRQAYYGVPVRMALIYKILGD</sequence>
<keyword id="KW-0665">Pyrimidine biosynthesis</keyword>
<keyword id="KW-0808">Transferase</keyword>
<feature type="chain" id="PRO_0000113262" description="Aspartate carbamoyltransferase catalytic subunit">
    <location>
        <begin position="1"/>
        <end position="305"/>
    </location>
</feature>
<feature type="binding site" evidence="1">
    <location>
        <position position="56"/>
    </location>
    <ligand>
        <name>carbamoyl phosphate</name>
        <dbReference type="ChEBI" id="CHEBI:58228"/>
    </ligand>
</feature>
<feature type="binding site" evidence="1">
    <location>
        <position position="57"/>
    </location>
    <ligand>
        <name>carbamoyl phosphate</name>
        <dbReference type="ChEBI" id="CHEBI:58228"/>
    </ligand>
</feature>
<feature type="binding site" evidence="1">
    <location>
        <position position="85"/>
    </location>
    <ligand>
        <name>L-aspartate</name>
        <dbReference type="ChEBI" id="CHEBI:29991"/>
    </ligand>
</feature>
<feature type="binding site" evidence="1">
    <location>
        <position position="106"/>
    </location>
    <ligand>
        <name>carbamoyl phosphate</name>
        <dbReference type="ChEBI" id="CHEBI:58228"/>
    </ligand>
</feature>
<feature type="binding site" evidence="1">
    <location>
        <position position="134"/>
    </location>
    <ligand>
        <name>carbamoyl phosphate</name>
        <dbReference type="ChEBI" id="CHEBI:58228"/>
    </ligand>
</feature>
<feature type="binding site" evidence="1">
    <location>
        <position position="137"/>
    </location>
    <ligand>
        <name>carbamoyl phosphate</name>
        <dbReference type="ChEBI" id="CHEBI:58228"/>
    </ligand>
</feature>
<feature type="binding site" evidence="1">
    <location>
        <position position="167"/>
    </location>
    <ligand>
        <name>L-aspartate</name>
        <dbReference type="ChEBI" id="CHEBI:29991"/>
    </ligand>
</feature>
<feature type="binding site" evidence="1">
    <location>
        <position position="227"/>
    </location>
    <ligand>
        <name>L-aspartate</name>
        <dbReference type="ChEBI" id="CHEBI:29991"/>
    </ligand>
</feature>
<feature type="binding site" evidence="1">
    <location>
        <position position="266"/>
    </location>
    <ligand>
        <name>carbamoyl phosphate</name>
        <dbReference type="ChEBI" id="CHEBI:58228"/>
    </ligand>
</feature>
<feature type="binding site" evidence="1">
    <location>
        <position position="267"/>
    </location>
    <ligand>
        <name>carbamoyl phosphate</name>
        <dbReference type="ChEBI" id="CHEBI:58228"/>
    </ligand>
</feature>
<evidence type="ECO:0000255" key="1">
    <source>
        <dbReference type="HAMAP-Rule" id="MF_00001"/>
    </source>
</evidence>
<protein>
    <recommendedName>
        <fullName evidence="1">Aspartate carbamoyltransferase catalytic subunit</fullName>
        <ecNumber evidence="1">2.1.3.2</ecNumber>
    </recommendedName>
    <alternativeName>
        <fullName evidence="1">Aspartate transcarbamylase</fullName>
        <shortName evidence="1">ATCase</shortName>
    </alternativeName>
</protein>
<dbReference type="EC" id="2.1.3.2" evidence="1"/>
<dbReference type="EMBL" id="BA000011">
    <property type="protein sequence ID" value="BAB59772.1"/>
    <property type="molecule type" value="Genomic_DNA"/>
</dbReference>
<dbReference type="RefSeq" id="WP_010916889.1">
    <property type="nucleotide sequence ID" value="NC_002689.2"/>
</dbReference>
<dbReference type="SMR" id="Q97B29"/>
<dbReference type="STRING" id="273116.gene:9381418"/>
<dbReference type="PaxDb" id="273116-14324846"/>
<dbReference type="GeneID" id="1441737"/>
<dbReference type="KEGG" id="tvo:TVG0624440"/>
<dbReference type="eggNOG" id="arCOG00911">
    <property type="taxonomic scope" value="Archaea"/>
</dbReference>
<dbReference type="HOGENOM" id="CLU_043846_1_2_2"/>
<dbReference type="OrthoDB" id="7792at2157"/>
<dbReference type="PhylomeDB" id="Q97B29"/>
<dbReference type="UniPathway" id="UPA00070">
    <property type="reaction ID" value="UER00116"/>
</dbReference>
<dbReference type="Proteomes" id="UP000001017">
    <property type="component" value="Chromosome"/>
</dbReference>
<dbReference type="GO" id="GO:0016597">
    <property type="term" value="F:amino acid binding"/>
    <property type="evidence" value="ECO:0007669"/>
    <property type="project" value="InterPro"/>
</dbReference>
<dbReference type="GO" id="GO:0004070">
    <property type="term" value="F:aspartate carbamoyltransferase activity"/>
    <property type="evidence" value="ECO:0007669"/>
    <property type="project" value="UniProtKB-UniRule"/>
</dbReference>
<dbReference type="GO" id="GO:0006207">
    <property type="term" value="P:'de novo' pyrimidine nucleobase biosynthetic process"/>
    <property type="evidence" value="ECO:0007669"/>
    <property type="project" value="InterPro"/>
</dbReference>
<dbReference type="GO" id="GO:0044205">
    <property type="term" value="P:'de novo' UMP biosynthetic process"/>
    <property type="evidence" value="ECO:0007669"/>
    <property type="project" value="UniProtKB-UniRule"/>
</dbReference>
<dbReference type="GO" id="GO:0006520">
    <property type="term" value="P:amino acid metabolic process"/>
    <property type="evidence" value="ECO:0007669"/>
    <property type="project" value="InterPro"/>
</dbReference>
<dbReference type="FunFam" id="3.40.50.1370:FF:000001">
    <property type="entry name" value="Aspartate carbamoyltransferase"/>
    <property type="match status" value="1"/>
</dbReference>
<dbReference type="FunFam" id="3.40.50.1370:FF:000002">
    <property type="entry name" value="Aspartate carbamoyltransferase 2"/>
    <property type="match status" value="1"/>
</dbReference>
<dbReference type="Gene3D" id="3.40.50.1370">
    <property type="entry name" value="Aspartate/ornithine carbamoyltransferase"/>
    <property type="match status" value="2"/>
</dbReference>
<dbReference type="HAMAP" id="MF_00001">
    <property type="entry name" value="Asp_carb_tr"/>
    <property type="match status" value="1"/>
</dbReference>
<dbReference type="InterPro" id="IPR006132">
    <property type="entry name" value="Asp/Orn_carbamoyltranf_P-bd"/>
</dbReference>
<dbReference type="InterPro" id="IPR006130">
    <property type="entry name" value="Asp/Orn_carbamoylTrfase"/>
</dbReference>
<dbReference type="InterPro" id="IPR036901">
    <property type="entry name" value="Asp/Orn_carbamoylTrfase_sf"/>
</dbReference>
<dbReference type="InterPro" id="IPR002082">
    <property type="entry name" value="Asp_carbamoyltransf"/>
</dbReference>
<dbReference type="InterPro" id="IPR006131">
    <property type="entry name" value="Asp_carbamoyltransf_Asp/Orn-bd"/>
</dbReference>
<dbReference type="NCBIfam" id="TIGR00670">
    <property type="entry name" value="asp_carb_tr"/>
    <property type="match status" value="1"/>
</dbReference>
<dbReference type="NCBIfam" id="NF002032">
    <property type="entry name" value="PRK00856.1"/>
    <property type="match status" value="1"/>
</dbReference>
<dbReference type="PANTHER" id="PTHR45753:SF6">
    <property type="entry name" value="ASPARTATE CARBAMOYLTRANSFERASE"/>
    <property type="match status" value="1"/>
</dbReference>
<dbReference type="PANTHER" id="PTHR45753">
    <property type="entry name" value="ORNITHINE CARBAMOYLTRANSFERASE, MITOCHONDRIAL"/>
    <property type="match status" value="1"/>
</dbReference>
<dbReference type="Pfam" id="PF00185">
    <property type="entry name" value="OTCace"/>
    <property type="match status" value="1"/>
</dbReference>
<dbReference type="Pfam" id="PF02729">
    <property type="entry name" value="OTCace_N"/>
    <property type="match status" value="1"/>
</dbReference>
<dbReference type="PRINTS" id="PR00100">
    <property type="entry name" value="AOTCASE"/>
</dbReference>
<dbReference type="PRINTS" id="PR00101">
    <property type="entry name" value="ATCASE"/>
</dbReference>
<dbReference type="SUPFAM" id="SSF53671">
    <property type="entry name" value="Aspartate/ornithine carbamoyltransferase"/>
    <property type="match status" value="1"/>
</dbReference>
<dbReference type="PROSITE" id="PS00097">
    <property type="entry name" value="CARBAMOYLTRANSFERASE"/>
    <property type="match status" value="1"/>
</dbReference>
<gene>
    <name evidence="1" type="primary">pyrB</name>
    <name type="ordered locus">TV0630</name>
    <name type="ORF">TVG0624440</name>
</gene>
<name>PYRB_THEVO</name>
<reference key="1">
    <citation type="journal article" date="2000" name="Proc. Natl. Acad. Sci. U.S.A.">
        <title>Archaeal adaptation to higher temperatures revealed by genomic sequence of Thermoplasma volcanium.</title>
        <authorList>
            <person name="Kawashima T."/>
            <person name="Amano N."/>
            <person name="Koike H."/>
            <person name="Makino S."/>
            <person name="Higuchi S."/>
            <person name="Kawashima-Ohya Y."/>
            <person name="Watanabe K."/>
            <person name="Yamazaki M."/>
            <person name="Kanehori K."/>
            <person name="Kawamoto T."/>
            <person name="Nunoshiba T."/>
            <person name="Yamamoto Y."/>
            <person name="Aramaki H."/>
            <person name="Makino K."/>
            <person name="Suzuki M."/>
        </authorList>
    </citation>
    <scope>NUCLEOTIDE SEQUENCE [LARGE SCALE GENOMIC DNA]</scope>
    <source>
        <strain>ATCC 51530 / DSM 4299 / JCM 9571 / NBRC 15438 / GSS1</strain>
    </source>
</reference>
<proteinExistence type="inferred from homology"/>
<organism>
    <name type="scientific">Thermoplasma volcanium (strain ATCC 51530 / DSM 4299 / JCM 9571 / NBRC 15438 / GSS1)</name>
    <dbReference type="NCBI Taxonomy" id="273116"/>
    <lineage>
        <taxon>Archaea</taxon>
        <taxon>Methanobacteriati</taxon>
        <taxon>Thermoplasmatota</taxon>
        <taxon>Thermoplasmata</taxon>
        <taxon>Thermoplasmatales</taxon>
        <taxon>Thermoplasmataceae</taxon>
        <taxon>Thermoplasma</taxon>
    </lineage>
</organism>